<reference key="1">
    <citation type="journal article" date="2004" name="Nature">
        <title>Genome evolution in yeasts.</title>
        <authorList>
            <person name="Dujon B."/>
            <person name="Sherman D."/>
            <person name="Fischer G."/>
            <person name="Durrens P."/>
            <person name="Casaregola S."/>
            <person name="Lafontaine I."/>
            <person name="de Montigny J."/>
            <person name="Marck C."/>
            <person name="Neuveglise C."/>
            <person name="Talla E."/>
            <person name="Goffard N."/>
            <person name="Frangeul L."/>
            <person name="Aigle M."/>
            <person name="Anthouard V."/>
            <person name="Babour A."/>
            <person name="Barbe V."/>
            <person name="Barnay S."/>
            <person name="Blanchin S."/>
            <person name="Beckerich J.-M."/>
            <person name="Beyne E."/>
            <person name="Bleykasten C."/>
            <person name="Boisrame A."/>
            <person name="Boyer J."/>
            <person name="Cattolico L."/>
            <person name="Confanioleri F."/>
            <person name="de Daruvar A."/>
            <person name="Despons L."/>
            <person name="Fabre E."/>
            <person name="Fairhead C."/>
            <person name="Ferry-Dumazet H."/>
            <person name="Groppi A."/>
            <person name="Hantraye F."/>
            <person name="Hennequin C."/>
            <person name="Jauniaux N."/>
            <person name="Joyet P."/>
            <person name="Kachouri R."/>
            <person name="Kerrest A."/>
            <person name="Koszul R."/>
            <person name="Lemaire M."/>
            <person name="Lesur I."/>
            <person name="Ma L."/>
            <person name="Muller H."/>
            <person name="Nicaud J.-M."/>
            <person name="Nikolski M."/>
            <person name="Oztas S."/>
            <person name="Ozier-Kalogeropoulos O."/>
            <person name="Pellenz S."/>
            <person name="Potier S."/>
            <person name="Richard G.-F."/>
            <person name="Straub M.-L."/>
            <person name="Suleau A."/>
            <person name="Swennen D."/>
            <person name="Tekaia F."/>
            <person name="Wesolowski-Louvel M."/>
            <person name="Westhof E."/>
            <person name="Wirth B."/>
            <person name="Zeniou-Meyer M."/>
            <person name="Zivanovic Y."/>
            <person name="Bolotin-Fukuhara M."/>
            <person name="Thierry A."/>
            <person name="Bouchier C."/>
            <person name="Caudron B."/>
            <person name="Scarpelli C."/>
            <person name="Gaillardin C."/>
            <person name="Weissenbach J."/>
            <person name="Wincker P."/>
            <person name="Souciet J.-L."/>
        </authorList>
    </citation>
    <scope>NUCLEOTIDE SEQUENCE [LARGE SCALE GENOMIC DNA]</scope>
    <source>
        <strain>ATCC 2001 / BCRC 20586 / JCM 3761 / NBRC 0622 / NRRL Y-65 / CBS 138</strain>
    </source>
</reference>
<name>LOC1_CANGA</name>
<sequence>MGSIKKTKGKSQSTKRVVTPEVFADQQARNQLANAPNLTEKSERRKANKLQVKKEQARARLYGKKKKESTYSEKDLDLPSLNKAVNPGVKLRRGKKGKKFIDDHDSLTLHRLIKTIGDKYDDITESKLEKDRRLEVIRELKRQEIERKEAAKQSQLEEKKDELKKKSSIARSMRRKNRRDQERDLHTTSNDKVQRKKKSVSFA</sequence>
<proteinExistence type="inferred from homology"/>
<comment type="function">
    <text evidence="1">Required for efficient assembly and nuclear export of the 60S ribosomal subunit.</text>
</comment>
<comment type="subunit">
    <text evidence="1">Component of the 66S pre-ribosomal particle.</text>
</comment>
<comment type="subcellular location">
    <subcellularLocation>
        <location evidence="1">Nucleus</location>
        <location evidence="1">Nucleolus</location>
    </subcellularLocation>
</comment>
<comment type="similarity">
    <text evidence="4">Belongs to the LOC1 family.</text>
</comment>
<accession>Q6FUM3</accession>
<protein>
    <recommendedName>
        <fullName>60S ribosomal subunit assembly/export protein LOC1</fullName>
    </recommendedName>
</protein>
<dbReference type="EMBL" id="CR380952">
    <property type="protein sequence ID" value="CAG58995.1"/>
    <property type="molecule type" value="Genomic_DNA"/>
</dbReference>
<dbReference type="RefSeq" id="XP_446071.1">
    <property type="nucleotide sequence ID" value="XM_446071.1"/>
</dbReference>
<dbReference type="SMR" id="Q6FUM3"/>
<dbReference type="FunCoup" id="Q6FUM3">
    <property type="interactions" value="420"/>
</dbReference>
<dbReference type="STRING" id="284593.Q6FUM3"/>
<dbReference type="EnsemblFungi" id="CAGL0F02299g-T">
    <property type="protein sequence ID" value="CAGL0F02299g-T-p1"/>
    <property type="gene ID" value="CAGL0F02299g"/>
</dbReference>
<dbReference type="KEGG" id="cgr:2887670"/>
<dbReference type="CGD" id="CAL0131356">
    <property type="gene designation" value="CAGL0F02299g"/>
</dbReference>
<dbReference type="VEuPathDB" id="FungiDB:CAGL0F02299g"/>
<dbReference type="eggNOG" id="ENOG502RY6R">
    <property type="taxonomic scope" value="Eukaryota"/>
</dbReference>
<dbReference type="HOGENOM" id="CLU_096593_1_0_1"/>
<dbReference type="InParanoid" id="Q6FUM3"/>
<dbReference type="OMA" id="RESMNTI"/>
<dbReference type="Proteomes" id="UP000002428">
    <property type="component" value="Chromosome F"/>
</dbReference>
<dbReference type="GO" id="GO:0005730">
    <property type="term" value="C:nucleolus"/>
    <property type="evidence" value="ECO:0007669"/>
    <property type="project" value="UniProtKB-SubCell"/>
</dbReference>
<dbReference type="GO" id="GO:0030687">
    <property type="term" value="C:preribosome, large subunit precursor"/>
    <property type="evidence" value="ECO:0007669"/>
    <property type="project" value="EnsemblFungi"/>
</dbReference>
<dbReference type="GO" id="GO:0101031">
    <property type="term" value="C:protein folding chaperone complex"/>
    <property type="evidence" value="ECO:0007669"/>
    <property type="project" value="EnsemblFungi"/>
</dbReference>
<dbReference type="GO" id="GO:0042802">
    <property type="term" value="F:identical protein binding"/>
    <property type="evidence" value="ECO:0007669"/>
    <property type="project" value="EnsemblFungi"/>
</dbReference>
<dbReference type="GO" id="GO:0003729">
    <property type="term" value="F:mRNA binding"/>
    <property type="evidence" value="ECO:0007669"/>
    <property type="project" value="EnsemblFungi"/>
</dbReference>
<dbReference type="GO" id="GO:0043022">
    <property type="term" value="F:ribosome binding"/>
    <property type="evidence" value="ECO:0007669"/>
    <property type="project" value="EnsemblFungi"/>
</dbReference>
<dbReference type="GO" id="GO:0140691">
    <property type="term" value="F:RNA folding chaperone"/>
    <property type="evidence" value="ECO:0007669"/>
    <property type="project" value="EnsemblFungi"/>
</dbReference>
<dbReference type="GO" id="GO:0033592">
    <property type="term" value="F:RNA strand annealing activity"/>
    <property type="evidence" value="ECO:0007669"/>
    <property type="project" value="EnsemblFungi"/>
</dbReference>
<dbReference type="GO" id="GO:0000480">
    <property type="term" value="P:endonucleolytic cleavage in 5'-ETS of tricistronic rRNA transcript (SSU-rRNA, 5.8S rRNA, LSU-rRNA)"/>
    <property type="evidence" value="ECO:0007669"/>
    <property type="project" value="EnsemblFungi"/>
</dbReference>
<dbReference type="GO" id="GO:0000447">
    <property type="term" value="P:endonucleolytic cleavage in ITS1 to separate SSU-rRNA from 5.8S rRNA and LSU-rRNA from tricistronic rRNA transcript (SSU-rRNA, 5.8S rRNA, LSU-rRNA)"/>
    <property type="evidence" value="ECO:0007669"/>
    <property type="project" value="EnsemblFungi"/>
</dbReference>
<dbReference type="GO" id="GO:0000472">
    <property type="term" value="P:endonucleolytic cleavage to generate mature 5'-end of SSU-rRNA from (SSU-rRNA, 5.8S rRNA, LSU-rRNA)"/>
    <property type="evidence" value="ECO:0007669"/>
    <property type="project" value="EnsemblFungi"/>
</dbReference>
<dbReference type="GO" id="GO:0008298">
    <property type="term" value="P:intracellular mRNA localization"/>
    <property type="evidence" value="ECO:0007669"/>
    <property type="project" value="EnsemblFungi"/>
</dbReference>
<dbReference type="GO" id="GO:0051028">
    <property type="term" value="P:mRNA transport"/>
    <property type="evidence" value="ECO:0007669"/>
    <property type="project" value="UniProtKB-KW"/>
</dbReference>
<dbReference type="GO" id="GO:0017148">
    <property type="term" value="P:negative regulation of translation"/>
    <property type="evidence" value="ECO:0007669"/>
    <property type="project" value="EnsemblFungi"/>
</dbReference>
<dbReference type="GO" id="GO:0042273">
    <property type="term" value="P:ribosomal large subunit biogenesis"/>
    <property type="evidence" value="ECO:0007669"/>
    <property type="project" value="EnsemblFungi"/>
</dbReference>
<dbReference type="GO" id="GO:0000055">
    <property type="term" value="P:ribosomal large subunit export from nucleus"/>
    <property type="evidence" value="ECO:0007669"/>
    <property type="project" value="EnsemblFungi"/>
</dbReference>
<dbReference type="InterPro" id="IPR037650">
    <property type="entry name" value="Loc1"/>
</dbReference>
<dbReference type="PANTHER" id="PTHR28028">
    <property type="entry name" value="60S RIBOSOMAL SUBUNIT ASSEMBLY/EXPORT PROTEIN LOC1"/>
    <property type="match status" value="1"/>
</dbReference>
<dbReference type="PANTHER" id="PTHR28028:SF1">
    <property type="entry name" value="60S RIBOSOMAL SUBUNIT ASSEMBLY_EXPORT PROTEIN LOC1"/>
    <property type="match status" value="1"/>
</dbReference>
<evidence type="ECO:0000250" key="1"/>
<evidence type="ECO:0000255" key="2"/>
<evidence type="ECO:0000256" key="3">
    <source>
        <dbReference type="SAM" id="MobiDB-lite"/>
    </source>
</evidence>
<evidence type="ECO:0000305" key="4"/>
<organism>
    <name type="scientific">Candida glabrata (strain ATCC 2001 / BCRC 20586 / JCM 3761 / NBRC 0622 / NRRL Y-65 / CBS 138)</name>
    <name type="common">Yeast</name>
    <name type="synonym">Nakaseomyces glabratus</name>
    <dbReference type="NCBI Taxonomy" id="284593"/>
    <lineage>
        <taxon>Eukaryota</taxon>
        <taxon>Fungi</taxon>
        <taxon>Dikarya</taxon>
        <taxon>Ascomycota</taxon>
        <taxon>Saccharomycotina</taxon>
        <taxon>Saccharomycetes</taxon>
        <taxon>Saccharomycetales</taxon>
        <taxon>Saccharomycetaceae</taxon>
        <taxon>Nakaseomyces</taxon>
    </lineage>
</organism>
<gene>
    <name type="primary">LOC1</name>
    <name type="ordered locus">CAGL0F02299g</name>
</gene>
<feature type="chain" id="PRO_0000308791" description="60S ribosomal subunit assembly/export protein LOC1">
    <location>
        <begin position="1"/>
        <end position="203"/>
    </location>
</feature>
<feature type="region of interest" description="Disordered" evidence="3">
    <location>
        <begin position="1"/>
        <end position="82"/>
    </location>
</feature>
<feature type="region of interest" description="Disordered" evidence="3">
    <location>
        <begin position="147"/>
        <end position="203"/>
    </location>
</feature>
<feature type="coiled-coil region" evidence="2">
    <location>
        <begin position="129"/>
        <end position="176"/>
    </location>
</feature>
<feature type="compositionally biased region" description="Polar residues" evidence="3">
    <location>
        <begin position="27"/>
        <end position="39"/>
    </location>
</feature>
<feature type="compositionally biased region" description="Basic and acidic residues" evidence="3">
    <location>
        <begin position="68"/>
        <end position="77"/>
    </location>
</feature>
<feature type="compositionally biased region" description="Basic and acidic residues" evidence="3">
    <location>
        <begin position="147"/>
        <end position="165"/>
    </location>
</feature>
<feature type="compositionally biased region" description="Basic residues" evidence="3">
    <location>
        <begin position="166"/>
        <end position="178"/>
    </location>
</feature>
<feature type="compositionally biased region" description="Basic residues" evidence="3">
    <location>
        <begin position="194"/>
        <end position="203"/>
    </location>
</feature>
<keyword id="KW-0175">Coiled coil</keyword>
<keyword id="KW-0509">mRNA transport</keyword>
<keyword id="KW-0539">Nucleus</keyword>
<keyword id="KW-1185">Reference proteome</keyword>
<keyword id="KW-0690">Ribosome biogenesis</keyword>
<keyword id="KW-0813">Transport</keyword>